<name>PEN3A_PENVA</name>
<evidence type="ECO:0000269" key="1">
    <source>
    </source>
</evidence>
<evidence type="ECO:0000269" key="2">
    <source>
    </source>
</evidence>
<evidence type="ECO:0000269" key="3">
    <source>
    </source>
</evidence>
<evidence type="ECO:0000269" key="4">
    <source>
    </source>
</evidence>
<evidence type="ECO:0000305" key="5"/>
<evidence type="ECO:0007829" key="6">
    <source>
        <dbReference type="PDB" id="1UEO"/>
    </source>
</evidence>
<accession>P81058</accession>
<dbReference type="EMBL" id="Y14926">
    <property type="protein sequence ID" value="CAA75143.1"/>
    <property type="molecule type" value="mRNA"/>
</dbReference>
<dbReference type="EMBL" id="AF387661">
    <property type="protein sequence ID" value="AAK73084.1"/>
    <property type="molecule type" value="mRNA"/>
</dbReference>
<dbReference type="EMBL" id="AF387662">
    <property type="protein sequence ID" value="AAK73085.1"/>
    <property type="molecule type" value="mRNA"/>
</dbReference>
<dbReference type="EMBL" id="AF387663">
    <property type="protein sequence ID" value="AAK73086.1"/>
    <property type="molecule type" value="mRNA"/>
</dbReference>
<dbReference type="EMBL" id="AF390139">
    <property type="protein sequence ID" value="AAK77532.1"/>
    <property type="molecule type" value="mRNA"/>
</dbReference>
<dbReference type="PDB" id="1UEO">
    <property type="method" value="NMR"/>
    <property type="chains" value="A=20-82"/>
</dbReference>
<dbReference type="PDBsum" id="1UEO"/>
<dbReference type="SMR" id="P81058"/>
<dbReference type="EvolutionaryTrace" id="P81058"/>
<dbReference type="GO" id="GO:0005737">
    <property type="term" value="C:cytoplasm"/>
    <property type="evidence" value="ECO:0000314"/>
    <property type="project" value="UniProtKB"/>
</dbReference>
<dbReference type="GO" id="GO:0008061">
    <property type="term" value="F:chitin binding"/>
    <property type="evidence" value="ECO:0000314"/>
    <property type="project" value="UniProtKB"/>
</dbReference>
<dbReference type="GO" id="GO:0042742">
    <property type="term" value="P:defense response to bacterium"/>
    <property type="evidence" value="ECO:0000314"/>
    <property type="project" value="UniProtKB"/>
</dbReference>
<dbReference type="GO" id="GO:0050832">
    <property type="term" value="P:defense response to fungus"/>
    <property type="evidence" value="ECO:0000314"/>
    <property type="project" value="UniProtKB"/>
</dbReference>
<dbReference type="GO" id="GO:0050830">
    <property type="term" value="P:defense response to Gram-positive bacterium"/>
    <property type="evidence" value="ECO:0000315"/>
    <property type="project" value="CAFA"/>
</dbReference>
<dbReference type="GO" id="GO:0031640">
    <property type="term" value="P:killing of cells of another organism"/>
    <property type="evidence" value="ECO:0007669"/>
    <property type="project" value="UniProtKB-KW"/>
</dbReference>
<dbReference type="InterPro" id="IPR009226">
    <property type="entry name" value="Penaeidin"/>
</dbReference>
<dbReference type="Pfam" id="PF05927">
    <property type="entry name" value="Penaeidin"/>
    <property type="match status" value="1"/>
</dbReference>
<feature type="signal peptide" evidence="1 4">
    <location>
        <begin position="1"/>
        <end position="19"/>
    </location>
</feature>
<feature type="chain" id="PRO_0000023506" description="Penaeidin-3a">
    <location>
        <begin position="20"/>
        <end position="81"/>
    </location>
</feature>
<feature type="modified residue" description="Pyrrolidone carboxylic acid" evidence="4">
    <location>
        <position position="20"/>
    </location>
</feature>
<feature type="modified residue" description="Serine amide" evidence="4">
    <location>
        <position position="81"/>
    </location>
</feature>
<feature type="disulfide bond" evidence="3">
    <location>
        <begin position="51"/>
        <end position="66"/>
    </location>
</feature>
<feature type="disulfide bond" evidence="3">
    <location>
        <begin position="55"/>
        <end position="73"/>
    </location>
</feature>
<feature type="disulfide bond" evidence="3">
    <location>
        <begin position="67"/>
        <end position="74"/>
    </location>
</feature>
<feature type="strand" evidence="6">
    <location>
        <begin position="26"/>
        <end position="30"/>
    </location>
</feature>
<feature type="helix" evidence="6">
    <location>
        <begin position="60"/>
        <end position="70"/>
    </location>
</feature>
<keyword id="KW-0002">3D-structure</keyword>
<keyword id="KW-0027">Amidation</keyword>
<keyword id="KW-0044">Antibiotic</keyword>
<keyword id="KW-0929">Antimicrobial</keyword>
<keyword id="KW-0147">Chitin-binding</keyword>
<keyword id="KW-0903">Direct protein sequencing</keyword>
<keyword id="KW-1015">Disulfide bond</keyword>
<keyword id="KW-0295">Fungicide</keyword>
<keyword id="KW-0873">Pyrrolidone carboxylic acid</keyword>
<keyword id="KW-0732">Signal</keyword>
<organism>
    <name type="scientific">Penaeus vannamei</name>
    <name type="common">Whiteleg shrimp</name>
    <name type="synonym">Litopenaeus vannamei</name>
    <dbReference type="NCBI Taxonomy" id="6689"/>
    <lineage>
        <taxon>Eukaryota</taxon>
        <taxon>Metazoa</taxon>
        <taxon>Ecdysozoa</taxon>
        <taxon>Arthropoda</taxon>
        <taxon>Crustacea</taxon>
        <taxon>Multicrustacea</taxon>
        <taxon>Malacostraca</taxon>
        <taxon>Eumalacostraca</taxon>
        <taxon>Eucarida</taxon>
        <taxon>Decapoda</taxon>
        <taxon>Dendrobranchiata</taxon>
        <taxon>Penaeoidea</taxon>
        <taxon>Penaeidae</taxon>
        <taxon>Penaeus</taxon>
    </lineage>
</organism>
<protein>
    <recommendedName>
        <fullName>Penaeidin-3a</fullName>
        <shortName>P3-a</shortName>
        <shortName>Pen-3a</shortName>
    </recommendedName>
</protein>
<proteinExistence type="evidence at protein level"/>
<comment type="function">
    <text evidence="1 4">Antibacterial activity against M.luteus and E.coli bacteria. Antifungal activity against N.crassa and F.oxysporum. Presents chitin-binding activity.</text>
</comment>
<comment type="subcellular location">
    <subcellularLocation>
        <location evidence="2">Cytoplasmic granule</location>
    </subcellularLocation>
    <text>Cytoplasmic granules of hemocytes and to a lesser extent in small granules of hemocytes.</text>
</comment>
<comment type="tissue specificity">
    <text evidence="2">Higher expression in hemocytes and to a lesser extent in heart, testis, gills, intestine, lymphoid organ and hepatopancreas. Traces in eyes and subcuticular epithelium. Not present in the brain.</text>
</comment>
<comment type="developmental stage">
    <text evidence="2">Expression decreases 3 hours after microbial challenge to return to control levels after 12 hours and slightly increases after 24 hours.</text>
</comment>
<comment type="PTM">
    <text evidence="4">The N-terminus forms pyrrolidone carboxylic acid.</text>
</comment>
<comment type="mass spectrometry"/>
<comment type="similarity">
    <text evidence="5">Belongs to the penaeidin family.</text>
</comment>
<sequence>MRLVVCLVFLASFALVCQGQVYKGGYTRPIPRPPPFVRPLPGGPIGPYNGCPVSCRGISFSQARSCCSRLGRCCHVGKGYSG</sequence>
<reference key="1">
    <citation type="journal article" date="1997" name="J. Biol. Chem.">
        <title>Penaeidins, a new family of antimicrobial peptides isolated from the shrimp Penaeus vannamei (Decapoda).</title>
        <authorList>
            <person name="Destoumieux D."/>
            <person name="Bulet P."/>
            <person name="Loew D."/>
            <person name="van Dorsselaer A."/>
            <person name="Rodriguez J."/>
            <person name="Bachere E."/>
        </authorList>
    </citation>
    <scope>NUCLEOTIDE SEQUENCE [MRNA]</scope>
    <scope>PROTEIN SEQUENCE OF 20-81</scope>
    <scope>PYROGLUTAMATE FORMATION AT GLN-20</scope>
    <scope>FUNCTION</scope>
    <scope>MASS SPECTROMETRY</scope>
    <scope>AMIDATION AT SER-81</scope>
    <source>
        <tissue>Hemocyte</tissue>
    </source>
</reference>
<reference key="2">
    <citation type="journal article" date="2002" name="Immunogenetics">
        <title>Diversity of the penaeidin antimicrobial peptides in two shrimp species.</title>
        <authorList>
            <person name="Cuthbertson B.J."/>
            <person name="Shepard E.F."/>
            <person name="Chapman R.W."/>
            <person name="Gross P.S."/>
        </authorList>
    </citation>
    <scope>NUCLEOTIDE SEQUENCE [MRNA]</scope>
</reference>
<reference key="3">
    <citation type="journal article" date="1999" name="Eur. J. Biochem.">
        <title>Recombinant expression and range of activity of penaeidins, antimicrobial peptides from penaeid shrimp.</title>
        <authorList>
            <person name="Destoumieux D."/>
            <person name="Bulet P."/>
            <person name="Strub J.-M."/>
            <person name="van Dorsselaer A."/>
            <person name="Bachere E."/>
        </authorList>
    </citation>
    <scope>NUCLEOTIDE SEQUENCE [MRNA] OF 20-82</scope>
    <scope>PROTEIN SEQUENCE OF 20-31</scope>
    <scope>FUNCTION</scope>
</reference>
<reference key="4">
    <citation type="journal article" date="2000" name="J. Cell Sci.">
        <title>Penaeidins, antimicrobial peptides with chitin-binding activity, are produced and stored in shrimp granulocytes and released after microbial challenge.</title>
        <authorList>
            <person name="Destoumieux D."/>
            <person name="Munoz M."/>
            <person name="Cosseau C."/>
            <person name="Rodriguez J."/>
            <person name="Bulet P."/>
            <person name="Comps M."/>
            <person name="Bachere E."/>
        </authorList>
    </citation>
    <scope>CHITIN-BINDING PROPERTIES</scope>
    <scope>TISSUE SPECIFICITY</scope>
    <scope>SUBCELLULAR LOCATION</scope>
    <scope>DEVELOPMENTAL STAGE</scope>
    <source>
        <tissue>Hemocyte</tissue>
    </source>
</reference>
<reference key="5">
    <citation type="journal article" date="2000" name="Cell. Mol. Life Sci.">
        <title>Penaeidins, a family of antimicrobial peptides from penaeid shrimp (Crustacea, Decapoda).</title>
        <authorList>
            <person name="Destoumieux D."/>
            <person name="Munoz M."/>
            <person name="Bulet P."/>
            <person name="Bachere E."/>
        </authorList>
    </citation>
    <scope>REVIEW</scope>
</reference>
<reference key="6">
    <citation type="journal article" date="2003" name="J. Biol. Chem.">
        <title>Solution structure of the recombinant penaeidin-3, a shrimp antimicrobial peptide.</title>
        <authorList>
            <person name="Yang Y."/>
            <person name="Poncet J."/>
            <person name="Garnier J."/>
            <person name="Zatylny C."/>
            <person name="Bachere E."/>
            <person name="Aumelas A."/>
        </authorList>
    </citation>
    <scope>STRUCTURE BY NMR</scope>
    <scope>DISULFIDE BONDS</scope>
</reference>